<comment type="subunit">
    <text evidence="4">Homodimer.</text>
</comment>
<comment type="interaction">
    <interactant intactId="EBI-15200952">
        <id>Q84TK1</id>
    </interactant>
    <interactant intactId="EBI-15216058">
        <id>Q0WNR2</id>
        <label>BHLH90</label>
    </interactant>
    <organismsDiffer>false</organismsDiffer>
    <experiments>3</experiments>
</comment>
<comment type="subcellular location">
    <subcellularLocation>
        <location evidence="1">Nucleus</location>
    </subcellularLocation>
</comment>
<comment type="induction">
    <text evidence="3">By UV treatment.</text>
</comment>
<comment type="sequence caution" evidence="4">
    <conflict type="erroneous gene model prediction">
        <sequence resource="EMBL-CDS" id="AAD20667"/>
    </conflict>
</comment>
<keyword id="KW-0238">DNA-binding</keyword>
<keyword id="KW-0539">Nucleus</keyword>
<keyword id="KW-1185">Reference proteome</keyword>
<keyword id="KW-0804">Transcription</keyword>
<keyword id="KW-0805">Transcription regulation</keyword>
<evidence type="ECO:0000255" key="1">
    <source>
        <dbReference type="PROSITE-ProRule" id="PRU00981"/>
    </source>
</evidence>
<evidence type="ECO:0000256" key="2">
    <source>
        <dbReference type="SAM" id="MobiDB-lite"/>
    </source>
</evidence>
<evidence type="ECO:0000269" key="3">
    <source>
    </source>
</evidence>
<evidence type="ECO:0000305" key="4"/>
<accession>Q84TK1</accession>
<accession>Q9SJX4</accession>
<name>BH010_ARATH</name>
<feature type="chain" id="PRO_0000358727" description="Transcription factor bHLH10">
    <location>
        <begin position="1"/>
        <end position="458"/>
    </location>
</feature>
<feature type="domain" description="bHLH" evidence="1">
    <location>
        <begin position="243"/>
        <end position="292"/>
    </location>
</feature>
<feature type="region of interest" description="Disordered" evidence="2">
    <location>
        <begin position="1"/>
        <end position="49"/>
    </location>
</feature>
<feature type="region of interest" description="Disordered" evidence="2">
    <location>
        <begin position="315"/>
        <end position="338"/>
    </location>
</feature>
<feature type="compositionally biased region" description="Acidic residues" evidence="2">
    <location>
        <begin position="324"/>
        <end position="334"/>
    </location>
</feature>
<dbReference type="EMBL" id="AC006593">
    <property type="protein sequence ID" value="AAD20667.1"/>
    <property type="status" value="ALT_SEQ"/>
    <property type="molecule type" value="Genomic_DNA"/>
</dbReference>
<dbReference type="EMBL" id="CP002685">
    <property type="protein sequence ID" value="ANM62996.1"/>
    <property type="molecule type" value="Genomic_DNA"/>
</dbReference>
<dbReference type="EMBL" id="BT005711">
    <property type="protein sequence ID" value="AAO64131.1"/>
    <property type="molecule type" value="mRNA"/>
</dbReference>
<dbReference type="EMBL" id="BT008608">
    <property type="protein sequence ID" value="AAP40433.1"/>
    <property type="molecule type" value="mRNA"/>
</dbReference>
<dbReference type="EMBL" id="AK228592">
    <property type="protein sequence ID" value="BAF00507.1"/>
    <property type="molecule type" value="mRNA"/>
</dbReference>
<dbReference type="EMBL" id="AF251695">
    <property type="protein sequence ID" value="AAL55717.1"/>
    <property type="molecule type" value="mRNA"/>
</dbReference>
<dbReference type="PIR" id="A84718">
    <property type="entry name" value="A84718"/>
</dbReference>
<dbReference type="RefSeq" id="NP_001318326.1">
    <property type="nucleotide sequence ID" value="NM_001336324.1"/>
</dbReference>
<dbReference type="RefSeq" id="NP_180680.2">
    <property type="nucleotide sequence ID" value="NM_128678.5"/>
</dbReference>
<dbReference type="SMR" id="Q84TK1"/>
<dbReference type="BioGRID" id="3027">
    <property type="interactions" value="107"/>
</dbReference>
<dbReference type="FunCoup" id="Q84TK1">
    <property type="interactions" value="112"/>
</dbReference>
<dbReference type="IntAct" id="Q84TK1">
    <property type="interactions" value="105"/>
</dbReference>
<dbReference type="STRING" id="3702.Q84TK1"/>
<dbReference type="PaxDb" id="3702-AT2G31220.1"/>
<dbReference type="EnsemblPlants" id="AT2G31220.2">
    <property type="protein sequence ID" value="AT2G31220.2"/>
    <property type="gene ID" value="AT2G31220"/>
</dbReference>
<dbReference type="GeneID" id="817679"/>
<dbReference type="Gramene" id="AT2G31220.2">
    <property type="protein sequence ID" value="AT2G31220.2"/>
    <property type="gene ID" value="AT2G31220"/>
</dbReference>
<dbReference type="KEGG" id="ath:AT2G31220"/>
<dbReference type="Araport" id="AT2G31220"/>
<dbReference type="TAIR" id="AT2G31220">
    <property type="gene designation" value="BHLH010"/>
</dbReference>
<dbReference type="eggNOG" id="ENOG502QQIQ">
    <property type="taxonomic scope" value="Eukaryota"/>
</dbReference>
<dbReference type="HOGENOM" id="CLU_045325_0_0_1"/>
<dbReference type="InParanoid" id="Q84TK1"/>
<dbReference type="PhylomeDB" id="Q84TK1"/>
<dbReference type="PRO" id="PR:Q84TK1"/>
<dbReference type="Proteomes" id="UP000006548">
    <property type="component" value="Chromosome 2"/>
</dbReference>
<dbReference type="ExpressionAtlas" id="Q84TK1">
    <property type="expression patterns" value="baseline and differential"/>
</dbReference>
<dbReference type="GO" id="GO:0005634">
    <property type="term" value="C:nucleus"/>
    <property type="evidence" value="ECO:0007669"/>
    <property type="project" value="UniProtKB-SubCell"/>
</dbReference>
<dbReference type="GO" id="GO:0003677">
    <property type="term" value="F:DNA binding"/>
    <property type="evidence" value="ECO:0007669"/>
    <property type="project" value="UniProtKB-KW"/>
</dbReference>
<dbReference type="GO" id="GO:0003700">
    <property type="term" value="F:DNA-binding transcription factor activity"/>
    <property type="evidence" value="ECO:0000250"/>
    <property type="project" value="TAIR"/>
</dbReference>
<dbReference type="GO" id="GO:0046983">
    <property type="term" value="F:protein dimerization activity"/>
    <property type="evidence" value="ECO:0007669"/>
    <property type="project" value="InterPro"/>
</dbReference>
<dbReference type="GO" id="GO:0048658">
    <property type="term" value="P:anther wall tapetum development"/>
    <property type="evidence" value="ECO:0000316"/>
    <property type="project" value="TAIR"/>
</dbReference>
<dbReference type="GO" id="GO:0052543">
    <property type="term" value="P:callose deposition in cell wall"/>
    <property type="evidence" value="ECO:0000316"/>
    <property type="project" value="TAIR"/>
</dbReference>
<dbReference type="GO" id="GO:0009555">
    <property type="term" value="P:pollen development"/>
    <property type="evidence" value="ECO:0000316"/>
    <property type="project" value="TAIR"/>
</dbReference>
<dbReference type="GO" id="GO:0006355">
    <property type="term" value="P:regulation of DNA-templated transcription"/>
    <property type="evidence" value="ECO:0000270"/>
    <property type="project" value="TAIR"/>
</dbReference>
<dbReference type="CDD" id="cd18918">
    <property type="entry name" value="bHLH_AtMYC1_like"/>
    <property type="match status" value="1"/>
</dbReference>
<dbReference type="FunFam" id="4.10.280.10:FF:000118">
    <property type="entry name" value="Transcription factor bHLH10"/>
    <property type="match status" value="1"/>
</dbReference>
<dbReference type="Gene3D" id="4.10.280.10">
    <property type="entry name" value="Helix-loop-helix DNA-binding domain"/>
    <property type="match status" value="1"/>
</dbReference>
<dbReference type="InterPro" id="IPR045895">
    <property type="entry name" value="bHLH91-like"/>
</dbReference>
<dbReference type="InterPro" id="IPR011598">
    <property type="entry name" value="bHLH_dom"/>
</dbReference>
<dbReference type="InterPro" id="IPR036638">
    <property type="entry name" value="HLH_DNA-bd_sf"/>
</dbReference>
<dbReference type="InterPro" id="IPR045896">
    <property type="entry name" value="MYC1-like_bHLH"/>
</dbReference>
<dbReference type="PANTHER" id="PTHR46834:SF1">
    <property type="entry name" value="TRANSCRIPTION FACTOR BHLH10"/>
    <property type="match status" value="1"/>
</dbReference>
<dbReference type="PANTHER" id="PTHR46834">
    <property type="entry name" value="TRANSCRIPTION FACTOR BHLH91"/>
    <property type="match status" value="1"/>
</dbReference>
<dbReference type="Pfam" id="PF00010">
    <property type="entry name" value="HLH"/>
    <property type="match status" value="1"/>
</dbReference>
<dbReference type="SMART" id="SM00353">
    <property type="entry name" value="HLH"/>
    <property type="match status" value="1"/>
</dbReference>
<dbReference type="SUPFAM" id="SSF47459">
    <property type="entry name" value="HLH, helix-loop-helix DNA-binding domain"/>
    <property type="match status" value="1"/>
</dbReference>
<dbReference type="PROSITE" id="PS50888">
    <property type="entry name" value="BHLH"/>
    <property type="match status" value="1"/>
</dbReference>
<proteinExistence type="evidence at protein level"/>
<protein>
    <recommendedName>
        <fullName>Transcription factor bHLH10</fullName>
    </recommendedName>
    <alternativeName>
        <fullName>Basic helix-loop-helix protein 10</fullName>
        <shortName>AtbHLH10</shortName>
        <shortName>bHLH 10</shortName>
    </alternativeName>
    <alternativeName>
        <fullName>Transcription factor EN 23</fullName>
    </alternativeName>
    <alternativeName>
        <fullName>bHLH transcription factor bHLH010</fullName>
    </alternativeName>
</protein>
<gene>
    <name type="primary">BHLH10</name>
    <name type="synonym">EN23</name>
    <name type="ordered locus">At2g31220</name>
    <name type="ORF">F16D14.6</name>
</gene>
<organism>
    <name type="scientific">Arabidopsis thaliana</name>
    <name type="common">Mouse-ear cress</name>
    <dbReference type="NCBI Taxonomy" id="3702"/>
    <lineage>
        <taxon>Eukaryota</taxon>
        <taxon>Viridiplantae</taxon>
        <taxon>Streptophyta</taxon>
        <taxon>Embryophyta</taxon>
        <taxon>Tracheophyta</taxon>
        <taxon>Spermatophyta</taxon>
        <taxon>Magnoliopsida</taxon>
        <taxon>eudicotyledons</taxon>
        <taxon>Gunneridae</taxon>
        <taxon>Pentapetalae</taxon>
        <taxon>rosids</taxon>
        <taxon>malvids</taxon>
        <taxon>Brassicales</taxon>
        <taxon>Brassicaceae</taxon>
        <taxon>Camelineae</taxon>
        <taxon>Arabidopsis</taxon>
    </lineage>
</organism>
<sequence>MEEERESLYEEMGCFDPNTPAEVTVESSFSQAEPPPPPPQVLVAGSTSNSNCSVEVEELSEFHLSPQDCPQASSTPLQFHINPPPPPPPPCDQLHNNLIHQMASHQQQHSNWDNGYQDFVNLGPNSATTPDLLSLLHLPRCSLPPNHHPSSMLPTSFSDIMSSSSAAAVMYDPLFHLNFPMQPRDQNQLRNGSCLLGVEDQIQMDANGGMNVLYFEGANNNNGGFENEILEFNNGVTRKGRGSRKSRTSPTERERRVHFNDRFFDLKNLIPNPTKIDRASIVGEAIDYIKELLRTIEEFKMLVEKKRCGRFRSKKRARVGEGGGGEDQEEEEDTVNYKPQSEVDQSCFNKNNNNSLRCSWLKRKSKVTEVDVRIIDDEVTIKLVQKKKINCLLFTTKVLDQLQLDLHHVAGGQIGEHYSFLFNTKICEGSCVYASGIADTLMEVVEKQYMEAVPSNGY</sequence>
<reference key="1">
    <citation type="journal article" date="1999" name="Nature">
        <title>Sequence and analysis of chromosome 2 of the plant Arabidopsis thaliana.</title>
        <authorList>
            <person name="Lin X."/>
            <person name="Kaul S."/>
            <person name="Rounsley S.D."/>
            <person name="Shea T.P."/>
            <person name="Benito M.-I."/>
            <person name="Town C.D."/>
            <person name="Fujii C.Y."/>
            <person name="Mason T.M."/>
            <person name="Bowman C.L."/>
            <person name="Barnstead M.E."/>
            <person name="Feldblyum T.V."/>
            <person name="Buell C.R."/>
            <person name="Ketchum K.A."/>
            <person name="Lee J.J."/>
            <person name="Ronning C.M."/>
            <person name="Koo H.L."/>
            <person name="Moffat K.S."/>
            <person name="Cronin L.A."/>
            <person name="Shen M."/>
            <person name="Pai G."/>
            <person name="Van Aken S."/>
            <person name="Umayam L."/>
            <person name="Tallon L.J."/>
            <person name="Gill J.E."/>
            <person name="Adams M.D."/>
            <person name="Carrera A.J."/>
            <person name="Creasy T.H."/>
            <person name="Goodman H.M."/>
            <person name="Somerville C.R."/>
            <person name="Copenhaver G.P."/>
            <person name="Preuss D."/>
            <person name="Nierman W.C."/>
            <person name="White O."/>
            <person name="Eisen J.A."/>
            <person name="Salzberg S.L."/>
            <person name="Fraser C.M."/>
            <person name="Venter J.C."/>
        </authorList>
    </citation>
    <scope>NUCLEOTIDE SEQUENCE [LARGE SCALE GENOMIC DNA]</scope>
    <source>
        <strain>cv. Columbia</strain>
    </source>
</reference>
<reference key="2">
    <citation type="journal article" date="2017" name="Plant J.">
        <title>Araport11: a complete reannotation of the Arabidopsis thaliana reference genome.</title>
        <authorList>
            <person name="Cheng C.Y."/>
            <person name="Krishnakumar V."/>
            <person name="Chan A.P."/>
            <person name="Thibaud-Nissen F."/>
            <person name="Schobel S."/>
            <person name="Town C.D."/>
        </authorList>
    </citation>
    <scope>GENOME REANNOTATION</scope>
    <source>
        <strain>cv. Columbia</strain>
    </source>
</reference>
<reference key="3">
    <citation type="journal article" date="2003" name="Science">
        <title>Empirical analysis of transcriptional activity in the Arabidopsis genome.</title>
        <authorList>
            <person name="Yamada K."/>
            <person name="Lim J."/>
            <person name="Dale J.M."/>
            <person name="Chen H."/>
            <person name="Shinn P."/>
            <person name="Palm C.J."/>
            <person name="Southwick A.M."/>
            <person name="Wu H.C."/>
            <person name="Kim C.J."/>
            <person name="Nguyen M."/>
            <person name="Pham P.K."/>
            <person name="Cheuk R.F."/>
            <person name="Karlin-Newmann G."/>
            <person name="Liu S.X."/>
            <person name="Lam B."/>
            <person name="Sakano H."/>
            <person name="Wu T."/>
            <person name="Yu G."/>
            <person name="Miranda M."/>
            <person name="Quach H.L."/>
            <person name="Tripp M."/>
            <person name="Chang C.H."/>
            <person name="Lee J.M."/>
            <person name="Toriumi M.J."/>
            <person name="Chan M.M."/>
            <person name="Tang C.C."/>
            <person name="Onodera C.S."/>
            <person name="Deng J.M."/>
            <person name="Akiyama K."/>
            <person name="Ansari Y."/>
            <person name="Arakawa T."/>
            <person name="Banh J."/>
            <person name="Banno F."/>
            <person name="Bowser L."/>
            <person name="Brooks S.Y."/>
            <person name="Carninci P."/>
            <person name="Chao Q."/>
            <person name="Choy N."/>
            <person name="Enju A."/>
            <person name="Goldsmith A.D."/>
            <person name="Gurjal M."/>
            <person name="Hansen N.F."/>
            <person name="Hayashizaki Y."/>
            <person name="Johnson-Hopson C."/>
            <person name="Hsuan V.W."/>
            <person name="Iida K."/>
            <person name="Karnes M."/>
            <person name="Khan S."/>
            <person name="Koesema E."/>
            <person name="Ishida J."/>
            <person name="Jiang P.X."/>
            <person name="Jones T."/>
            <person name="Kawai J."/>
            <person name="Kamiya A."/>
            <person name="Meyers C."/>
            <person name="Nakajima M."/>
            <person name="Narusaka M."/>
            <person name="Seki M."/>
            <person name="Sakurai T."/>
            <person name="Satou M."/>
            <person name="Tamse R."/>
            <person name="Vaysberg M."/>
            <person name="Wallender E.K."/>
            <person name="Wong C."/>
            <person name="Yamamura Y."/>
            <person name="Yuan S."/>
            <person name="Shinozaki K."/>
            <person name="Davis R.W."/>
            <person name="Theologis A."/>
            <person name="Ecker J.R."/>
        </authorList>
    </citation>
    <scope>NUCLEOTIDE SEQUENCE [LARGE SCALE MRNA]</scope>
    <source>
        <strain>cv. Columbia</strain>
    </source>
</reference>
<reference key="4">
    <citation type="submission" date="2006-07" db="EMBL/GenBank/DDBJ databases">
        <title>Large-scale analysis of RIKEN Arabidopsis full-length (RAFL) cDNAs.</title>
        <authorList>
            <person name="Totoki Y."/>
            <person name="Seki M."/>
            <person name="Ishida J."/>
            <person name="Nakajima M."/>
            <person name="Enju A."/>
            <person name="Kamiya A."/>
            <person name="Narusaka M."/>
            <person name="Shin-i T."/>
            <person name="Nakagawa M."/>
            <person name="Sakamoto N."/>
            <person name="Oishi K."/>
            <person name="Kohara Y."/>
            <person name="Kobayashi M."/>
            <person name="Toyoda A."/>
            <person name="Sakaki Y."/>
            <person name="Sakurai T."/>
            <person name="Iida K."/>
            <person name="Akiyama K."/>
            <person name="Satou M."/>
            <person name="Toyoda T."/>
            <person name="Konagaya A."/>
            <person name="Carninci P."/>
            <person name="Kawai J."/>
            <person name="Hayashizaki Y."/>
            <person name="Shinozaki K."/>
        </authorList>
    </citation>
    <scope>NUCLEOTIDE SEQUENCE [LARGE SCALE MRNA]</scope>
    <source>
        <strain>cv. Columbia</strain>
    </source>
</reference>
<reference key="5">
    <citation type="journal article" date="2003" name="Mol. Biol. Evol.">
        <title>The basic helix-loop-helix transcription factor family in plants: a genome-wide study of protein structure and functional diversity.</title>
        <authorList>
            <person name="Heim M.A."/>
            <person name="Jakoby M."/>
            <person name="Werber M."/>
            <person name="Martin C."/>
            <person name="Weisshaar B."/>
            <person name="Bailey P.C."/>
        </authorList>
    </citation>
    <scope>NUCLEOTIDE SEQUENCE [MRNA] OF 12-458</scope>
    <scope>INDUCTION BY UV LIGHT</scope>
    <scope>GENE FAMILY</scope>
    <scope>NOMENCLATURE</scope>
    <source>
        <strain>cv. Columbia</strain>
    </source>
</reference>
<reference key="6">
    <citation type="journal article" date="2003" name="Plant Cell">
        <title>The Arabidopsis basic/helix-loop-helix transcription factor family.</title>
        <authorList>
            <person name="Toledo-Ortiz G."/>
            <person name="Huq E."/>
            <person name="Quail P.H."/>
        </authorList>
    </citation>
    <scope>GENE FAMILY</scope>
</reference>
<reference key="7">
    <citation type="journal article" date="2003" name="Plant Cell">
        <title>Update on the basic helix-loop-helix transcription factor gene family in Arabidopsis thaliana.</title>
        <authorList>
            <person name="Bailey P.C."/>
            <person name="Martin C."/>
            <person name="Toledo-Ortiz G."/>
            <person name="Quail P.H."/>
            <person name="Huq E."/>
            <person name="Heim M.A."/>
            <person name="Jakoby M."/>
            <person name="Werber M."/>
            <person name="Weisshaar B."/>
        </authorList>
    </citation>
    <scope>GENE FAMILY</scope>
    <scope>NOMENCLATURE</scope>
</reference>